<evidence type="ECO:0000255" key="1">
    <source>
        <dbReference type="HAMAP-Rule" id="MF_00124"/>
    </source>
</evidence>
<organism>
    <name type="scientific">Clostridium botulinum (strain Langeland / NCTC 10281 / Type F)</name>
    <dbReference type="NCBI Taxonomy" id="441772"/>
    <lineage>
        <taxon>Bacteria</taxon>
        <taxon>Bacillati</taxon>
        <taxon>Bacillota</taxon>
        <taxon>Clostridia</taxon>
        <taxon>Eubacteriales</taxon>
        <taxon>Clostridiaceae</taxon>
        <taxon>Clostridium</taxon>
    </lineage>
</organism>
<gene>
    <name evidence="1" type="primary">tdk</name>
    <name type="ordered locus">CLI_0191</name>
</gene>
<feature type="chain" id="PRO_1000018154" description="Thymidine kinase">
    <location>
        <begin position="1"/>
        <end position="191"/>
    </location>
</feature>
<feature type="active site" description="Proton acceptor" evidence="1">
    <location>
        <position position="89"/>
    </location>
</feature>
<feature type="binding site" evidence="1">
    <location>
        <begin position="15"/>
        <end position="22"/>
    </location>
    <ligand>
        <name>ATP</name>
        <dbReference type="ChEBI" id="CHEBI:30616"/>
    </ligand>
</feature>
<feature type="binding site" evidence="1">
    <location>
        <begin position="88"/>
        <end position="91"/>
    </location>
    <ligand>
        <name>ATP</name>
        <dbReference type="ChEBI" id="CHEBI:30616"/>
    </ligand>
</feature>
<feature type="binding site" evidence="1">
    <location>
        <position position="145"/>
    </location>
    <ligand>
        <name>Zn(2+)</name>
        <dbReference type="ChEBI" id="CHEBI:29105"/>
    </ligand>
</feature>
<feature type="binding site" evidence="1">
    <location>
        <position position="148"/>
    </location>
    <ligand>
        <name>Zn(2+)</name>
        <dbReference type="ChEBI" id="CHEBI:29105"/>
    </ligand>
</feature>
<feature type="binding site" evidence="1">
    <location>
        <position position="183"/>
    </location>
    <ligand>
        <name>Zn(2+)</name>
        <dbReference type="ChEBI" id="CHEBI:29105"/>
    </ligand>
</feature>
<feature type="binding site" evidence="1">
    <location>
        <position position="186"/>
    </location>
    <ligand>
        <name>Zn(2+)</name>
        <dbReference type="ChEBI" id="CHEBI:29105"/>
    </ligand>
</feature>
<keyword id="KW-0067">ATP-binding</keyword>
<keyword id="KW-0963">Cytoplasm</keyword>
<keyword id="KW-0237">DNA synthesis</keyword>
<keyword id="KW-0418">Kinase</keyword>
<keyword id="KW-0479">Metal-binding</keyword>
<keyword id="KW-0547">Nucleotide-binding</keyword>
<keyword id="KW-0808">Transferase</keyword>
<keyword id="KW-0862">Zinc</keyword>
<name>KITH_CLOBL</name>
<dbReference type="EC" id="2.7.1.21" evidence="1"/>
<dbReference type="EMBL" id="CP000728">
    <property type="protein sequence ID" value="ABS41898.1"/>
    <property type="molecule type" value="Genomic_DNA"/>
</dbReference>
<dbReference type="RefSeq" id="WP_003405033.1">
    <property type="nucleotide sequence ID" value="NC_009699.1"/>
</dbReference>
<dbReference type="SMR" id="A7G9N9"/>
<dbReference type="KEGG" id="cbf:CLI_0191"/>
<dbReference type="HOGENOM" id="CLU_064400_3_0_9"/>
<dbReference type="Proteomes" id="UP000002410">
    <property type="component" value="Chromosome"/>
</dbReference>
<dbReference type="GO" id="GO:0005829">
    <property type="term" value="C:cytosol"/>
    <property type="evidence" value="ECO:0007669"/>
    <property type="project" value="TreeGrafter"/>
</dbReference>
<dbReference type="GO" id="GO:0005524">
    <property type="term" value="F:ATP binding"/>
    <property type="evidence" value="ECO:0007669"/>
    <property type="project" value="UniProtKB-UniRule"/>
</dbReference>
<dbReference type="GO" id="GO:0004797">
    <property type="term" value="F:thymidine kinase activity"/>
    <property type="evidence" value="ECO:0007669"/>
    <property type="project" value="UniProtKB-UniRule"/>
</dbReference>
<dbReference type="GO" id="GO:0008270">
    <property type="term" value="F:zinc ion binding"/>
    <property type="evidence" value="ECO:0007669"/>
    <property type="project" value="UniProtKB-UniRule"/>
</dbReference>
<dbReference type="GO" id="GO:0071897">
    <property type="term" value="P:DNA biosynthetic process"/>
    <property type="evidence" value="ECO:0007669"/>
    <property type="project" value="UniProtKB-KW"/>
</dbReference>
<dbReference type="GO" id="GO:0046104">
    <property type="term" value="P:thymidine metabolic process"/>
    <property type="evidence" value="ECO:0007669"/>
    <property type="project" value="TreeGrafter"/>
</dbReference>
<dbReference type="FunFam" id="3.30.60.20:FF:000026">
    <property type="entry name" value="Thymidine kinase"/>
    <property type="match status" value="1"/>
</dbReference>
<dbReference type="FunFam" id="3.40.50.300:FF:000384">
    <property type="entry name" value="Thymidine kinase"/>
    <property type="match status" value="1"/>
</dbReference>
<dbReference type="Gene3D" id="3.30.60.20">
    <property type="match status" value="1"/>
</dbReference>
<dbReference type="Gene3D" id="3.40.50.300">
    <property type="entry name" value="P-loop containing nucleotide triphosphate hydrolases"/>
    <property type="match status" value="1"/>
</dbReference>
<dbReference type="HAMAP" id="MF_00124">
    <property type="entry name" value="Thymidine_kinase"/>
    <property type="match status" value="1"/>
</dbReference>
<dbReference type="InterPro" id="IPR027417">
    <property type="entry name" value="P-loop_NTPase"/>
</dbReference>
<dbReference type="InterPro" id="IPR001267">
    <property type="entry name" value="Thymidine_kinase"/>
</dbReference>
<dbReference type="InterPro" id="IPR020633">
    <property type="entry name" value="Thymidine_kinase_CS"/>
</dbReference>
<dbReference type="NCBIfam" id="NF003296">
    <property type="entry name" value="PRK04296.1-1"/>
    <property type="match status" value="1"/>
</dbReference>
<dbReference type="PANTHER" id="PTHR11441">
    <property type="entry name" value="THYMIDINE KINASE"/>
    <property type="match status" value="1"/>
</dbReference>
<dbReference type="PANTHER" id="PTHR11441:SF0">
    <property type="entry name" value="THYMIDINE KINASE, CYTOSOLIC"/>
    <property type="match status" value="1"/>
</dbReference>
<dbReference type="Pfam" id="PF00265">
    <property type="entry name" value="TK"/>
    <property type="match status" value="1"/>
</dbReference>
<dbReference type="PIRSF" id="PIRSF035805">
    <property type="entry name" value="TK_cell"/>
    <property type="match status" value="1"/>
</dbReference>
<dbReference type="SUPFAM" id="SSF57716">
    <property type="entry name" value="Glucocorticoid receptor-like (DNA-binding domain)"/>
    <property type="match status" value="1"/>
</dbReference>
<dbReference type="SUPFAM" id="SSF52540">
    <property type="entry name" value="P-loop containing nucleoside triphosphate hydrolases"/>
    <property type="match status" value="1"/>
</dbReference>
<dbReference type="PROSITE" id="PS00603">
    <property type="entry name" value="TK_CELLULAR_TYPE"/>
    <property type="match status" value="1"/>
</dbReference>
<accession>A7G9N9</accession>
<reference key="1">
    <citation type="submission" date="2007-06" db="EMBL/GenBank/DDBJ databases">
        <authorList>
            <person name="Brinkac L.M."/>
            <person name="Daugherty S."/>
            <person name="Dodson R.J."/>
            <person name="Madupu R."/>
            <person name="Brown J.L."/>
            <person name="Bruce D."/>
            <person name="Detter C."/>
            <person name="Munk C."/>
            <person name="Smith L.A."/>
            <person name="Smith T.J."/>
            <person name="White O."/>
            <person name="Brettin T.S."/>
        </authorList>
    </citation>
    <scope>NUCLEOTIDE SEQUENCE [LARGE SCALE GENOMIC DNA]</scope>
    <source>
        <strain>Langeland / NCTC 10281 / Type F</strain>
    </source>
</reference>
<proteinExistence type="inferred from homology"/>
<protein>
    <recommendedName>
        <fullName evidence="1">Thymidine kinase</fullName>
        <ecNumber evidence="1">2.7.1.21</ecNumber>
    </recommendedName>
</protein>
<comment type="catalytic activity">
    <reaction evidence="1">
        <text>thymidine + ATP = dTMP + ADP + H(+)</text>
        <dbReference type="Rhea" id="RHEA:19129"/>
        <dbReference type="ChEBI" id="CHEBI:15378"/>
        <dbReference type="ChEBI" id="CHEBI:17748"/>
        <dbReference type="ChEBI" id="CHEBI:30616"/>
        <dbReference type="ChEBI" id="CHEBI:63528"/>
        <dbReference type="ChEBI" id="CHEBI:456216"/>
        <dbReference type="EC" id="2.7.1.21"/>
    </reaction>
</comment>
<comment type="subunit">
    <text evidence="1">Homotetramer.</text>
</comment>
<comment type="subcellular location">
    <subcellularLocation>
        <location evidence="1">Cytoplasm</location>
    </subcellularLocation>
</comment>
<comment type="similarity">
    <text evidence="1">Belongs to the thymidine kinase family.</text>
</comment>
<sequence length="191" mass="21545">MYGPKDHGWIEVVAGPMYSGKTEELIRRIRRAEIAKQKVQVFKPEIDNRYSKQDVVSHAGDKIQSVPVKSSKEILEKLLDDTDVIGIDEAQFFDDFLVEIVSKIANNNRRVICAGLDMDFKGEPFGPMPKLMAIAEFVDKIQAVCMVCNNPATRTQRLINGKPAKKSDPVVLIGAQESYEARCRKCHRVPR</sequence>